<name>RFCS_PYRHO</name>
<accession>O57852</accession>
<feature type="chain" id="PRO_0000030379" description="Replication factor C small subunit, 1st part" evidence="2">
    <location>
        <begin position="1"/>
        <end position="61"/>
    </location>
</feature>
<feature type="chain" id="PRO_0000030380" description="Pho RFC intein" evidence="2">
    <location>
        <begin position="62"/>
        <end position="586"/>
    </location>
</feature>
<feature type="chain" id="PRO_0000030381" description="Replication factor C small subunit, 2nd part" evidence="2">
    <location>
        <begin position="587"/>
        <end position="855"/>
    </location>
</feature>
<feature type="domain" description="DOD-type homing endonuclease" evidence="3">
    <location>
        <begin position="185"/>
        <end position="308"/>
    </location>
</feature>
<keyword id="KW-0067">ATP-binding</keyword>
<keyword id="KW-0068">Autocatalytic cleavage</keyword>
<keyword id="KW-0235">DNA replication</keyword>
<keyword id="KW-0547">Nucleotide-binding</keyword>
<keyword id="KW-0651">Protein splicing</keyword>
<reference key="1">
    <citation type="journal article" date="1998" name="DNA Res.">
        <title>Complete sequence and gene organization of the genome of a hyper-thermophilic archaebacterium, Pyrococcus horikoshii OT3.</title>
        <authorList>
            <person name="Kawarabayasi Y."/>
            <person name="Sawada M."/>
            <person name="Horikawa H."/>
            <person name="Haikawa Y."/>
            <person name="Hino Y."/>
            <person name="Yamamoto S."/>
            <person name="Sekine M."/>
            <person name="Baba S."/>
            <person name="Kosugi H."/>
            <person name="Hosoyama A."/>
            <person name="Nagai Y."/>
            <person name="Sakai M."/>
            <person name="Ogura K."/>
            <person name="Otsuka R."/>
            <person name="Nakazawa H."/>
            <person name="Takamiya M."/>
            <person name="Ohfuku Y."/>
            <person name="Funahashi T."/>
            <person name="Tanaka T."/>
            <person name="Kudoh Y."/>
            <person name="Yamazaki J."/>
            <person name="Kushida N."/>
            <person name="Oguchi A."/>
            <person name="Aoki K."/>
            <person name="Yoshizawa T."/>
            <person name="Nakamura Y."/>
            <person name="Robb F.T."/>
            <person name="Horikoshi K."/>
            <person name="Masuchi Y."/>
            <person name="Shizuya H."/>
            <person name="Kikuchi H."/>
        </authorList>
    </citation>
    <scope>NUCLEOTIDE SEQUENCE [LARGE SCALE GENOMIC DNA]</scope>
    <source>
        <strain>ATCC 700860 / DSM 12428 / JCM 9974 / NBRC 100139 / OT-3</strain>
    </source>
</reference>
<sequence length="855" mass="98422">MHNMEEVREVKVLEKPWVEKYRPQRLDEIVGQEHIVKRLKHYVKTGSMPHLLFAGPPGVGKCLTGDTKVIANGQLFELRELVEKISGGKFGPTPVKGLKVIGIDEDGKLREFEVQYVYKDKTERLIRIRTRLGRELKVTPYHPLLVNRRNGEIKWVKAEELKPGDKLAVPRFLPIVTGEDPLAEWLGYFLGGGYADSKENLIMFTNEDPLLRQRFMELTEKLFSDARIREITHENGTSKVYVNSKKALKLVNSLGNAHIPKECWRGIRSFLRAYFDCNGGVKGNAIVLATASKEMSQEIAYALAGFGIISRIQEYRVIISGSDNVKKFLNEIGFINRNKLEKALKLVKKDDPGHDGLEINYELISYVKDRLRLSFFNDKRSWSYREAKEISWELMKEIYYRLDELEKLKESLSRGILIDWNEVAKRIEEVAEETGIRADELLEYIEGKRKLSFKDYIKIAKVLGIDVEHTIEAMRVFARKYSSYAEIGRRLGTWNSSVKTILESNAVNVEILERIRKIELELIEEILSDEKLKEGIAYLIFLSQNELYWDEITKVEELRGEFIIYDLHVPGYHNFIAGNMPTVVHNTTAALALSRELFGENWRHNFLELNASDERGINVIREKVKEFARTKPIGGASFKIIFLDEADALTQDAQQALRRTMEMFSSNVRFILSCNYSSKIIEPIQSRCAIFRFRPLRDEDIAKRLRYIAENEGLELTEEGLQAILYIAEGDMRRAINILQAAAALDKKITDENVFMVASRARPEDIREMMLLALKGNFLKAREKLREILLKQGLSGEDVLIQMHKEVFNLPIDEPTKVYLADKIGEYNFRLVEGANEMIQLEALLAQFTLVGKKK</sequence>
<evidence type="ECO:0000250" key="1"/>
<evidence type="ECO:0000255" key="2"/>
<evidence type="ECO:0000255" key="3">
    <source>
        <dbReference type="PROSITE-ProRule" id="PRU00273"/>
    </source>
</evidence>
<evidence type="ECO:0000305" key="4"/>
<dbReference type="EMBL" id="BA000001">
    <property type="protein sequence ID" value="BAA29181.1"/>
    <property type="molecule type" value="Genomic_DNA"/>
</dbReference>
<dbReference type="PIR" id="F71231">
    <property type="entry name" value="F71231"/>
</dbReference>
<dbReference type="SMR" id="O57852"/>
<dbReference type="STRING" id="70601.gene:9377020"/>
<dbReference type="EnsemblBacteria" id="BAA29181">
    <property type="protein sequence ID" value="BAA29181"/>
    <property type="gene ID" value="BAA29181"/>
</dbReference>
<dbReference type="KEGG" id="pho:PH0112"/>
<dbReference type="eggNOG" id="arCOG00469">
    <property type="taxonomic scope" value="Archaea"/>
</dbReference>
<dbReference type="eggNOG" id="arCOG03154">
    <property type="taxonomic scope" value="Archaea"/>
</dbReference>
<dbReference type="Proteomes" id="UP000000752">
    <property type="component" value="Chromosome"/>
</dbReference>
<dbReference type="GO" id="GO:0005663">
    <property type="term" value="C:DNA replication factor C complex"/>
    <property type="evidence" value="ECO:0007669"/>
    <property type="project" value="TreeGrafter"/>
</dbReference>
<dbReference type="GO" id="GO:0005524">
    <property type="term" value="F:ATP binding"/>
    <property type="evidence" value="ECO:0007669"/>
    <property type="project" value="UniProtKB-KW"/>
</dbReference>
<dbReference type="GO" id="GO:0016887">
    <property type="term" value="F:ATP hydrolysis activity"/>
    <property type="evidence" value="ECO:0007669"/>
    <property type="project" value="InterPro"/>
</dbReference>
<dbReference type="GO" id="GO:0003677">
    <property type="term" value="F:DNA binding"/>
    <property type="evidence" value="ECO:0007669"/>
    <property type="project" value="InterPro"/>
</dbReference>
<dbReference type="GO" id="GO:0003689">
    <property type="term" value="F:DNA clamp loader activity"/>
    <property type="evidence" value="ECO:0007669"/>
    <property type="project" value="TreeGrafter"/>
</dbReference>
<dbReference type="GO" id="GO:0004519">
    <property type="term" value="F:endonuclease activity"/>
    <property type="evidence" value="ECO:0007669"/>
    <property type="project" value="InterPro"/>
</dbReference>
<dbReference type="GO" id="GO:0006281">
    <property type="term" value="P:DNA repair"/>
    <property type="evidence" value="ECO:0007669"/>
    <property type="project" value="TreeGrafter"/>
</dbReference>
<dbReference type="GO" id="GO:0006261">
    <property type="term" value="P:DNA-templated DNA replication"/>
    <property type="evidence" value="ECO:0007669"/>
    <property type="project" value="TreeGrafter"/>
</dbReference>
<dbReference type="GO" id="GO:0016539">
    <property type="term" value="P:intein-mediated protein splicing"/>
    <property type="evidence" value="ECO:0007669"/>
    <property type="project" value="InterPro"/>
</dbReference>
<dbReference type="CDD" id="cd00009">
    <property type="entry name" value="AAA"/>
    <property type="match status" value="1"/>
</dbReference>
<dbReference type="CDD" id="cd00081">
    <property type="entry name" value="Hint"/>
    <property type="match status" value="1"/>
</dbReference>
<dbReference type="CDD" id="cd18140">
    <property type="entry name" value="HLD_clamp_RFC"/>
    <property type="match status" value="1"/>
</dbReference>
<dbReference type="CDD" id="cd00093">
    <property type="entry name" value="HTH_XRE"/>
    <property type="match status" value="1"/>
</dbReference>
<dbReference type="FunFam" id="1.20.272.10:FF:000029">
    <property type="entry name" value="Replication factor C small subunit"/>
    <property type="match status" value="1"/>
</dbReference>
<dbReference type="FunFam" id="3.40.50.300:FF:003150">
    <property type="entry name" value="Replication factor C small subunit"/>
    <property type="match status" value="1"/>
</dbReference>
<dbReference type="FunFam" id="1.10.8.60:FF:000012">
    <property type="entry name" value="Replication factor C subunit 4"/>
    <property type="match status" value="1"/>
</dbReference>
<dbReference type="Gene3D" id="1.10.8.60">
    <property type="match status" value="1"/>
</dbReference>
<dbReference type="Gene3D" id="1.20.272.10">
    <property type="match status" value="1"/>
</dbReference>
<dbReference type="Gene3D" id="2.170.16.10">
    <property type="entry name" value="Hedgehog/Intein (Hint) domain"/>
    <property type="match status" value="2"/>
</dbReference>
<dbReference type="Gene3D" id="3.10.28.10">
    <property type="entry name" value="Homing endonucleases"/>
    <property type="match status" value="1"/>
</dbReference>
<dbReference type="Gene3D" id="3.40.50.300">
    <property type="entry name" value="P-loop containing nucleotide triphosphate hydrolases"/>
    <property type="match status" value="2"/>
</dbReference>
<dbReference type="InterPro" id="IPR003959">
    <property type="entry name" value="ATPase_AAA_core"/>
</dbReference>
<dbReference type="InterPro" id="IPR001387">
    <property type="entry name" value="Cro/C1-type_HTH"/>
</dbReference>
<dbReference type="InterPro" id="IPR008921">
    <property type="entry name" value="DNA_pol3_clamp-load_cplx_C"/>
</dbReference>
<dbReference type="InterPro" id="IPR050238">
    <property type="entry name" value="DNA_Rep/Repair_Clamp_Loader"/>
</dbReference>
<dbReference type="InterPro" id="IPR003586">
    <property type="entry name" value="Hint_dom_C"/>
</dbReference>
<dbReference type="InterPro" id="IPR003587">
    <property type="entry name" value="Hint_dom_N"/>
</dbReference>
<dbReference type="InterPro" id="IPR036844">
    <property type="entry name" value="Hint_dom_sf"/>
</dbReference>
<dbReference type="InterPro" id="IPR027434">
    <property type="entry name" value="Homing_endonucl"/>
</dbReference>
<dbReference type="InterPro" id="IPR006142">
    <property type="entry name" value="INTEIN"/>
</dbReference>
<dbReference type="InterPro" id="IPR030934">
    <property type="entry name" value="Intein_C"/>
</dbReference>
<dbReference type="InterPro" id="IPR004042">
    <property type="entry name" value="Intein_endonuc_central"/>
</dbReference>
<dbReference type="InterPro" id="IPR006141">
    <property type="entry name" value="Intein_N"/>
</dbReference>
<dbReference type="InterPro" id="IPR004860">
    <property type="entry name" value="LAGLIDADG_dom"/>
</dbReference>
<dbReference type="InterPro" id="IPR027417">
    <property type="entry name" value="P-loop_NTPase"/>
</dbReference>
<dbReference type="InterPro" id="IPR013748">
    <property type="entry name" value="Rep_factorC_C"/>
</dbReference>
<dbReference type="InterPro" id="IPR047854">
    <property type="entry name" value="RFC_lid"/>
</dbReference>
<dbReference type="NCBIfam" id="TIGR01443">
    <property type="entry name" value="intein_Cterm"/>
    <property type="match status" value="1"/>
</dbReference>
<dbReference type="NCBIfam" id="TIGR01445">
    <property type="entry name" value="intein_Nterm"/>
    <property type="match status" value="1"/>
</dbReference>
<dbReference type="NCBIfam" id="NF001679">
    <property type="entry name" value="PRK00440.1"/>
    <property type="match status" value="1"/>
</dbReference>
<dbReference type="NCBIfam" id="NF003157">
    <property type="entry name" value="PRK04132.1-2"/>
    <property type="match status" value="1"/>
</dbReference>
<dbReference type="NCBIfam" id="NF003159">
    <property type="entry name" value="PRK04132.1-4"/>
    <property type="match status" value="1"/>
</dbReference>
<dbReference type="PANTHER" id="PTHR11669">
    <property type="entry name" value="REPLICATION FACTOR C / DNA POLYMERASE III GAMMA-TAU SUBUNIT"/>
    <property type="match status" value="1"/>
</dbReference>
<dbReference type="PANTHER" id="PTHR11669:SF20">
    <property type="entry name" value="REPLICATION FACTOR C SUBUNIT 4"/>
    <property type="match status" value="1"/>
</dbReference>
<dbReference type="Pfam" id="PF00004">
    <property type="entry name" value="AAA"/>
    <property type="match status" value="1"/>
</dbReference>
<dbReference type="Pfam" id="PF14890">
    <property type="entry name" value="Intein_splicing"/>
    <property type="match status" value="1"/>
</dbReference>
<dbReference type="Pfam" id="PF14528">
    <property type="entry name" value="LAGLIDADG_3"/>
    <property type="match status" value="2"/>
</dbReference>
<dbReference type="Pfam" id="PF08542">
    <property type="entry name" value="Rep_fac_C"/>
    <property type="match status" value="1"/>
</dbReference>
<dbReference type="PRINTS" id="PR00379">
    <property type="entry name" value="INTEIN"/>
</dbReference>
<dbReference type="SMART" id="SM00305">
    <property type="entry name" value="HintC"/>
    <property type="match status" value="1"/>
</dbReference>
<dbReference type="SMART" id="SM00306">
    <property type="entry name" value="HintN"/>
    <property type="match status" value="1"/>
</dbReference>
<dbReference type="SMART" id="SM00530">
    <property type="entry name" value="HTH_XRE"/>
    <property type="match status" value="1"/>
</dbReference>
<dbReference type="SUPFAM" id="SSF51294">
    <property type="entry name" value="Hedgehog/intein (Hint) domain"/>
    <property type="match status" value="1"/>
</dbReference>
<dbReference type="SUPFAM" id="SSF55608">
    <property type="entry name" value="Homing endonucleases"/>
    <property type="match status" value="1"/>
</dbReference>
<dbReference type="SUPFAM" id="SSF52540">
    <property type="entry name" value="P-loop containing nucleoside triphosphate hydrolases"/>
    <property type="match status" value="2"/>
</dbReference>
<dbReference type="SUPFAM" id="SSF48019">
    <property type="entry name" value="post-AAA+ oligomerization domain-like"/>
    <property type="match status" value="1"/>
</dbReference>
<dbReference type="PROSITE" id="PS50818">
    <property type="entry name" value="INTEIN_C_TER"/>
    <property type="match status" value="1"/>
</dbReference>
<dbReference type="PROSITE" id="PS50819">
    <property type="entry name" value="INTEIN_ENDONUCLEASE"/>
    <property type="match status" value="1"/>
</dbReference>
<dbReference type="PROSITE" id="PS50817">
    <property type="entry name" value="INTEIN_N_TER"/>
    <property type="match status" value="1"/>
</dbReference>
<protein>
    <recommendedName>
        <fullName>Replication factor C small subunit</fullName>
        <shortName>RFC small subunit</shortName>
    </recommendedName>
    <alternativeName>
        <fullName>Clamp loader small subunit</fullName>
    </alternativeName>
    <component>
        <recommendedName>
            <fullName>Pho RFC intein</fullName>
        </recommendedName>
    </component>
</protein>
<organism>
    <name type="scientific">Pyrococcus horikoshii (strain ATCC 700860 / DSM 12428 / JCM 9974 / NBRC 100139 / OT-3)</name>
    <dbReference type="NCBI Taxonomy" id="70601"/>
    <lineage>
        <taxon>Archaea</taxon>
        <taxon>Methanobacteriati</taxon>
        <taxon>Methanobacteriota</taxon>
        <taxon>Thermococci</taxon>
        <taxon>Thermococcales</taxon>
        <taxon>Thermococcaceae</taxon>
        <taxon>Pyrococcus</taxon>
    </lineage>
</organism>
<proteinExistence type="inferred from homology"/>
<gene>
    <name type="primary">rfcS</name>
    <name type="ordered locus">PH0112</name>
</gene>
<comment type="function">
    <text evidence="1">Part of the RFC clamp loader complex which loads the PCNA sliding clamp onto DNA.</text>
</comment>
<comment type="subunit">
    <text evidence="1">Heteromultimer composed of small subunits (RfcS) and large subunits (RfcL).</text>
</comment>
<comment type="PTM">
    <text evidence="4">This protein undergoes a protein self splicing that involves a post-translational excision of the intervening region (intein) followed by peptide ligation.</text>
</comment>
<comment type="miscellaneous">
    <text>The intein interrupts the potential ATP-binding site.</text>
</comment>
<comment type="similarity">
    <text evidence="4">Belongs to the activator 1 small subunits family. RfcS subfamily.</text>
</comment>